<comment type="function">
    <text evidence="1">This protein is involved in the repair of mismatches in DNA. It is possible that it carries out the mismatch recognition step. This protein has a weak ATPase activity.</text>
</comment>
<comment type="similarity">
    <text evidence="1">Belongs to the DNA mismatch repair MutS family.</text>
</comment>
<reference key="1">
    <citation type="journal article" date="2009" name="PLoS Genet.">
        <title>Organised genome dynamics in the Escherichia coli species results in highly diverse adaptive paths.</title>
        <authorList>
            <person name="Touchon M."/>
            <person name="Hoede C."/>
            <person name="Tenaillon O."/>
            <person name="Barbe V."/>
            <person name="Baeriswyl S."/>
            <person name="Bidet P."/>
            <person name="Bingen E."/>
            <person name="Bonacorsi S."/>
            <person name="Bouchier C."/>
            <person name="Bouvet O."/>
            <person name="Calteau A."/>
            <person name="Chiapello H."/>
            <person name="Clermont O."/>
            <person name="Cruveiller S."/>
            <person name="Danchin A."/>
            <person name="Diard M."/>
            <person name="Dossat C."/>
            <person name="Karoui M.E."/>
            <person name="Frapy E."/>
            <person name="Garry L."/>
            <person name="Ghigo J.M."/>
            <person name="Gilles A.M."/>
            <person name="Johnson J."/>
            <person name="Le Bouguenec C."/>
            <person name="Lescat M."/>
            <person name="Mangenot S."/>
            <person name="Martinez-Jehanne V."/>
            <person name="Matic I."/>
            <person name="Nassif X."/>
            <person name="Oztas S."/>
            <person name="Petit M.A."/>
            <person name="Pichon C."/>
            <person name="Rouy Z."/>
            <person name="Ruf C.S."/>
            <person name="Schneider D."/>
            <person name="Tourret J."/>
            <person name="Vacherie B."/>
            <person name="Vallenet D."/>
            <person name="Medigue C."/>
            <person name="Rocha E.P.C."/>
            <person name="Denamur E."/>
        </authorList>
    </citation>
    <scope>NUCLEOTIDE SEQUENCE [LARGE SCALE GENOMIC DNA]</scope>
    <source>
        <strain>ATCC 35469 / DSM 13698 / BCRC 15582 / CCUG 18766 / IAM 14443 / JCM 21226 / LMG 7866 / NBRC 102419 / NCTC 12128 / CDC 0568-73</strain>
    </source>
</reference>
<organism>
    <name type="scientific">Escherichia fergusonii (strain ATCC 35469 / DSM 13698 / CCUG 18766 / IAM 14443 / JCM 21226 / LMG 7866 / NBRC 102419 / NCTC 12128 / CDC 0568-73)</name>
    <dbReference type="NCBI Taxonomy" id="585054"/>
    <lineage>
        <taxon>Bacteria</taxon>
        <taxon>Pseudomonadati</taxon>
        <taxon>Pseudomonadota</taxon>
        <taxon>Gammaproteobacteria</taxon>
        <taxon>Enterobacterales</taxon>
        <taxon>Enterobacteriaceae</taxon>
        <taxon>Escherichia</taxon>
    </lineage>
</organism>
<name>MUTS_ESCF3</name>
<protein>
    <recommendedName>
        <fullName evidence="1">DNA mismatch repair protein MutS</fullName>
    </recommendedName>
</protein>
<evidence type="ECO:0000255" key="1">
    <source>
        <dbReference type="HAMAP-Rule" id="MF_00096"/>
    </source>
</evidence>
<keyword id="KW-0067">ATP-binding</keyword>
<keyword id="KW-0227">DNA damage</keyword>
<keyword id="KW-0234">DNA repair</keyword>
<keyword id="KW-0238">DNA-binding</keyword>
<keyword id="KW-0547">Nucleotide-binding</keyword>
<proteinExistence type="inferred from homology"/>
<dbReference type="EMBL" id="CU928158">
    <property type="protein sequence ID" value="CAQ87897.1"/>
    <property type="molecule type" value="Genomic_DNA"/>
</dbReference>
<dbReference type="RefSeq" id="WP_001272891.1">
    <property type="nucleotide sequence ID" value="NC_011740.1"/>
</dbReference>
<dbReference type="SMR" id="B7LWH8"/>
<dbReference type="GeneID" id="75058595"/>
<dbReference type="KEGG" id="efe:EFER_0334"/>
<dbReference type="HOGENOM" id="CLU_002472_4_0_6"/>
<dbReference type="OrthoDB" id="9802448at2"/>
<dbReference type="Proteomes" id="UP000000745">
    <property type="component" value="Chromosome"/>
</dbReference>
<dbReference type="GO" id="GO:0005829">
    <property type="term" value="C:cytosol"/>
    <property type="evidence" value="ECO:0007669"/>
    <property type="project" value="TreeGrafter"/>
</dbReference>
<dbReference type="GO" id="GO:0005524">
    <property type="term" value="F:ATP binding"/>
    <property type="evidence" value="ECO:0007669"/>
    <property type="project" value="UniProtKB-UniRule"/>
</dbReference>
<dbReference type="GO" id="GO:0140664">
    <property type="term" value="F:ATP-dependent DNA damage sensor activity"/>
    <property type="evidence" value="ECO:0007669"/>
    <property type="project" value="InterPro"/>
</dbReference>
<dbReference type="GO" id="GO:0003684">
    <property type="term" value="F:damaged DNA binding"/>
    <property type="evidence" value="ECO:0007669"/>
    <property type="project" value="UniProtKB-UniRule"/>
</dbReference>
<dbReference type="GO" id="GO:0030983">
    <property type="term" value="F:mismatched DNA binding"/>
    <property type="evidence" value="ECO:0007669"/>
    <property type="project" value="InterPro"/>
</dbReference>
<dbReference type="GO" id="GO:0006298">
    <property type="term" value="P:mismatch repair"/>
    <property type="evidence" value="ECO:0007669"/>
    <property type="project" value="UniProtKB-UniRule"/>
</dbReference>
<dbReference type="CDD" id="cd03284">
    <property type="entry name" value="ABC_MutS1"/>
    <property type="match status" value="1"/>
</dbReference>
<dbReference type="FunFam" id="1.10.1420.10:FF:000002">
    <property type="entry name" value="DNA mismatch repair protein MutS"/>
    <property type="match status" value="1"/>
</dbReference>
<dbReference type="FunFam" id="3.30.420.110:FF:000001">
    <property type="entry name" value="DNA mismatch repair protein MutS"/>
    <property type="match status" value="1"/>
</dbReference>
<dbReference type="FunFam" id="3.40.1170.10:FF:000001">
    <property type="entry name" value="DNA mismatch repair protein MutS"/>
    <property type="match status" value="1"/>
</dbReference>
<dbReference type="FunFam" id="3.40.50.300:FF:000283">
    <property type="entry name" value="DNA mismatch repair protein MutS"/>
    <property type="match status" value="1"/>
</dbReference>
<dbReference type="Gene3D" id="1.10.1420.10">
    <property type="match status" value="2"/>
</dbReference>
<dbReference type="Gene3D" id="6.10.140.430">
    <property type="match status" value="1"/>
</dbReference>
<dbReference type="Gene3D" id="3.40.1170.10">
    <property type="entry name" value="DNA repair protein MutS, domain I"/>
    <property type="match status" value="1"/>
</dbReference>
<dbReference type="Gene3D" id="3.30.420.110">
    <property type="entry name" value="MutS, connector domain"/>
    <property type="match status" value="1"/>
</dbReference>
<dbReference type="Gene3D" id="3.40.50.300">
    <property type="entry name" value="P-loop containing nucleotide triphosphate hydrolases"/>
    <property type="match status" value="1"/>
</dbReference>
<dbReference type="HAMAP" id="MF_00096">
    <property type="entry name" value="MutS"/>
    <property type="match status" value="1"/>
</dbReference>
<dbReference type="InterPro" id="IPR005748">
    <property type="entry name" value="DNA_mismatch_repair_MutS"/>
</dbReference>
<dbReference type="InterPro" id="IPR007695">
    <property type="entry name" value="DNA_mismatch_repair_MutS-lik_N"/>
</dbReference>
<dbReference type="InterPro" id="IPR017261">
    <property type="entry name" value="DNA_mismatch_repair_MutS/MSH"/>
</dbReference>
<dbReference type="InterPro" id="IPR000432">
    <property type="entry name" value="DNA_mismatch_repair_MutS_C"/>
</dbReference>
<dbReference type="InterPro" id="IPR007861">
    <property type="entry name" value="DNA_mismatch_repair_MutS_clamp"/>
</dbReference>
<dbReference type="InterPro" id="IPR007696">
    <property type="entry name" value="DNA_mismatch_repair_MutS_core"/>
</dbReference>
<dbReference type="InterPro" id="IPR016151">
    <property type="entry name" value="DNA_mismatch_repair_MutS_N"/>
</dbReference>
<dbReference type="InterPro" id="IPR036187">
    <property type="entry name" value="DNA_mismatch_repair_MutS_sf"/>
</dbReference>
<dbReference type="InterPro" id="IPR007860">
    <property type="entry name" value="DNA_mmatch_repair_MutS_con_dom"/>
</dbReference>
<dbReference type="InterPro" id="IPR045076">
    <property type="entry name" value="MutS"/>
</dbReference>
<dbReference type="InterPro" id="IPR036678">
    <property type="entry name" value="MutS_con_dom_sf"/>
</dbReference>
<dbReference type="InterPro" id="IPR027417">
    <property type="entry name" value="P-loop_NTPase"/>
</dbReference>
<dbReference type="NCBIfam" id="TIGR01070">
    <property type="entry name" value="mutS1"/>
    <property type="match status" value="1"/>
</dbReference>
<dbReference type="NCBIfam" id="NF003810">
    <property type="entry name" value="PRK05399.1"/>
    <property type="match status" value="1"/>
</dbReference>
<dbReference type="PANTHER" id="PTHR11361:SF34">
    <property type="entry name" value="DNA MISMATCH REPAIR PROTEIN MSH1, MITOCHONDRIAL"/>
    <property type="match status" value="1"/>
</dbReference>
<dbReference type="PANTHER" id="PTHR11361">
    <property type="entry name" value="DNA MISMATCH REPAIR PROTEIN MUTS FAMILY MEMBER"/>
    <property type="match status" value="1"/>
</dbReference>
<dbReference type="Pfam" id="PF01624">
    <property type="entry name" value="MutS_I"/>
    <property type="match status" value="1"/>
</dbReference>
<dbReference type="Pfam" id="PF05188">
    <property type="entry name" value="MutS_II"/>
    <property type="match status" value="1"/>
</dbReference>
<dbReference type="Pfam" id="PF05192">
    <property type="entry name" value="MutS_III"/>
    <property type="match status" value="1"/>
</dbReference>
<dbReference type="Pfam" id="PF05190">
    <property type="entry name" value="MutS_IV"/>
    <property type="match status" value="1"/>
</dbReference>
<dbReference type="Pfam" id="PF00488">
    <property type="entry name" value="MutS_V"/>
    <property type="match status" value="1"/>
</dbReference>
<dbReference type="PIRSF" id="PIRSF037677">
    <property type="entry name" value="DNA_mis_repair_Msh6"/>
    <property type="match status" value="1"/>
</dbReference>
<dbReference type="SMART" id="SM00534">
    <property type="entry name" value="MUTSac"/>
    <property type="match status" value="1"/>
</dbReference>
<dbReference type="SMART" id="SM00533">
    <property type="entry name" value="MUTSd"/>
    <property type="match status" value="1"/>
</dbReference>
<dbReference type="SUPFAM" id="SSF55271">
    <property type="entry name" value="DNA repair protein MutS, domain I"/>
    <property type="match status" value="1"/>
</dbReference>
<dbReference type="SUPFAM" id="SSF53150">
    <property type="entry name" value="DNA repair protein MutS, domain II"/>
    <property type="match status" value="1"/>
</dbReference>
<dbReference type="SUPFAM" id="SSF48334">
    <property type="entry name" value="DNA repair protein MutS, domain III"/>
    <property type="match status" value="1"/>
</dbReference>
<dbReference type="SUPFAM" id="SSF52540">
    <property type="entry name" value="P-loop containing nucleoside triphosphate hydrolases"/>
    <property type="match status" value="1"/>
</dbReference>
<dbReference type="PROSITE" id="PS00486">
    <property type="entry name" value="DNA_MISMATCH_REPAIR_2"/>
    <property type="match status" value="1"/>
</dbReference>
<sequence length="853" mass="95304">MSAIENFDAHTPMMQQYLKLKAQHPEILLFYRMGDFYELFYDDAKRASQLLDISLTKRGASAGEPIPMAGIPYHAVENYLAKLVNQGESVAICEQIGDPATSKGPVERKVVRIVTPGTISDEALLQERQDNLLAAIWQDSKGFGYATLDISSGRFRLSEPADRETMAAELQRTNPAELLYAEDFAEMSLIEGRRGLRRRPLWEFEIDTARQQLNLQFGTRDLVGFGVENAPRGLCAAGCLLQYAKDTQRTTLPHIRSITMEREQDSIIMDAATRRNLEITQNLAGGAENTLASVLDCTVTPMGSRMLKRWLHMPVRDTRVLLERQQTIGALQDFTAELQPVLRQVGDLERILARLALRTARPRDLARMRHAFQQLPELRAQLENVDSAPVQALREKMGEFAELRDLLERAIIDTPPVLVRDGGVIASGYNEELDEWRALADGATDYLERLEVRERERTGLDTLKVGFNAVHGYYIQISRGQSHLAPINYMRRQTLKNAERYIIPELKEYEDKVLTSKGKALALEKQLYEELFDLLLPHLEALQQSASALAELDVLVNLAERAYTLNYTCPTFIDKPGIRITEGRHPVVEQVLNEPFIANPLNLSPQRRMLIITGPNMGGKSTYMRQTALIALMAYIGSYVPAQKVEIGPIDRIFTRVGAADDLASGRSTFMVEMTETANILHNATEYSLVLMDEIGRGTSTYDGLSLAWACAENLANKIKALTLFATHYFELTQLPEKMEGVANVHLDALEHGDTIAFMHSVQDGAASKSYGLAVAALAGVPKEVIKRARQKLRELESISPNAAATQVDGTQMSLLSVPEETSPAVEALENLDPDSLTPRQALEWIYRLKSLV</sequence>
<accession>B7LWH8</accession>
<feature type="chain" id="PRO_1000117289" description="DNA mismatch repair protein MutS">
    <location>
        <begin position="1"/>
        <end position="853"/>
    </location>
</feature>
<feature type="binding site" evidence="1">
    <location>
        <begin position="614"/>
        <end position="621"/>
    </location>
    <ligand>
        <name>ATP</name>
        <dbReference type="ChEBI" id="CHEBI:30616"/>
    </ligand>
</feature>
<gene>
    <name evidence="1" type="primary">mutS</name>
    <name type="ordered locus">EFER_0334</name>
</gene>